<evidence type="ECO:0000255" key="1">
    <source>
        <dbReference type="HAMAP-Rule" id="MF_00102"/>
    </source>
</evidence>
<evidence type="ECO:0000305" key="2"/>
<name>DAPB_YERPE</name>
<feature type="chain" id="PRO_0000141514" description="4-hydroxy-tetrahydrodipicolinate reductase">
    <location>
        <begin position="1"/>
        <end position="273"/>
    </location>
</feature>
<feature type="active site" description="Proton donor/acceptor" evidence="1">
    <location>
        <position position="159"/>
    </location>
</feature>
<feature type="active site" description="Proton donor" evidence="1">
    <location>
        <position position="163"/>
    </location>
</feature>
<feature type="binding site" evidence="1">
    <location>
        <begin position="12"/>
        <end position="17"/>
    </location>
    <ligand>
        <name>NAD(+)</name>
        <dbReference type="ChEBI" id="CHEBI:57540"/>
    </ligand>
</feature>
<feature type="binding site" evidence="1">
    <location>
        <position position="38"/>
    </location>
    <ligand>
        <name>NAD(+)</name>
        <dbReference type="ChEBI" id="CHEBI:57540"/>
    </ligand>
</feature>
<feature type="binding site" evidence="1">
    <location>
        <position position="39"/>
    </location>
    <ligand>
        <name>NADP(+)</name>
        <dbReference type="ChEBI" id="CHEBI:58349"/>
    </ligand>
</feature>
<feature type="binding site" evidence="1">
    <location>
        <begin position="102"/>
        <end position="104"/>
    </location>
    <ligand>
        <name>NAD(+)</name>
        <dbReference type="ChEBI" id="CHEBI:57540"/>
    </ligand>
</feature>
<feature type="binding site" evidence="1">
    <location>
        <begin position="126"/>
        <end position="129"/>
    </location>
    <ligand>
        <name>NAD(+)</name>
        <dbReference type="ChEBI" id="CHEBI:57540"/>
    </ligand>
</feature>
<feature type="binding site" evidence="1">
    <location>
        <position position="160"/>
    </location>
    <ligand>
        <name>(S)-2,3,4,5-tetrahydrodipicolinate</name>
        <dbReference type="ChEBI" id="CHEBI:16845"/>
    </ligand>
</feature>
<feature type="binding site" evidence="1">
    <location>
        <begin position="169"/>
        <end position="170"/>
    </location>
    <ligand>
        <name>(S)-2,3,4,5-tetrahydrodipicolinate</name>
        <dbReference type="ChEBI" id="CHEBI:16845"/>
    </ligand>
</feature>
<reference key="1">
    <citation type="journal article" date="2001" name="Nature">
        <title>Genome sequence of Yersinia pestis, the causative agent of plague.</title>
        <authorList>
            <person name="Parkhill J."/>
            <person name="Wren B.W."/>
            <person name="Thomson N.R."/>
            <person name="Titball R.W."/>
            <person name="Holden M.T.G."/>
            <person name="Prentice M.B."/>
            <person name="Sebaihia M."/>
            <person name="James K.D."/>
            <person name="Churcher C.M."/>
            <person name="Mungall K.L."/>
            <person name="Baker S."/>
            <person name="Basham D."/>
            <person name="Bentley S.D."/>
            <person name="Brooks K."/>
            <person name="Cerdeno-Tarraga A.-M."/>
            <person name="Chillingworth T."/>
            <person name="Cronin A."/>
            <person name="Davies R.M."/>
            <person name="Davis P."/>
            <person name="Dougan G."/>
            <person name="Feltwell T."/>
            <person name="Hamlin N."/>
            <person name="Holroyd S."/>
            <person name="Jagels K."/>
            <person name="Karlyshev A.V."/>
            <person name="Leather S."/>
            <person name="Moule S."/>
            <person name="Oyston P.C.F."/>
            <person name="Quail M.A."/>
            <person name="Rutherford K.M."/>
            <person name="Simmonds M."/>
            <person name="Skelton J."/>
            <person name="Stevens K."/>
            <person name="Whitehead S."/>
            <person name="Barrell B.G."/>
        </authorList>
    </citation>
    <scope>NUCLEOTIDE SEQUENCE [LARGE SCALE GENOMIC DNA]</scope>
    <source>
        <strain>CO-92 / Biovar Orientalis</strain>
    </source>
</reference>
<reference key="2">
    <citation type="journal article" date="2002" name="J. Bacteriol.">
        <title>Genome sequence of Yersinia pestis KIM.</title>
        <authorList>
            <person name="Deng W."/>
            <person name="Burland V."/>
            <person name="Plunkett G. III"/>
            <person name="Boutin A."/>
            <person name="Mayhew G.F."/>
            <person name="Liss P."/>
            <person name="Perna N.T."/>
            <person name="Rose D.J."/>
            <person name="Mau B."/>
            <person name="Zhou S."/>
            <person name="Schwartz D.C."/>
            <person name="Fetherston J.D."/>
            <person name="Lindler L.E."/>
            <person name="Brubaker R.R."/>
            <person name="Plano G.V."/>
            <person name="Straley S.C."/>
            <person name="McDonough K.A."/>
            <person name="Nilles M.L."/>
            <person name="Matson J.S."/>
            <person name="Blattner F.R."/>
            <person name="Perry R.D."/>
        </authorList>
    </citation>
    <scope>NUCLEOTIDE SEQUENCE [LARGE SCALE GENOMIC DNA]</scope>
    <source>
        <strain>KIM10+ / Biovar Mediaevalis</strain>
    </source>
</reference>
<reference key="3">
    <citation type="journal article" date="2004" name="DNA Res.">
        <title>Complete genome sequence of Yersinia pestis strain 91001, an isolate avirulent to humans.</title>
        <authorList>
            <person name="Song Y."/>
            <person name="Tong Z."/>
            <person name="Wang J."/>
            <person name="Wang L."/>
            <person name="Guo Z."/>
            <person name="Han Y."/>
            <person name="Zhang J."/>
            <person name="Pei D."/>
            <person name="Zhou D."/>
            <person name="Qin H."/>
            <person name="Pang X."/>
            <person name="Han Y."/>
            <person name="Zhai J."/>
            <person name="Li M."/>
            <person name="Cui B."/>
            <person name="Qi Z."/>
            <person name="Jin L."/>
            <person name="Dai R."/>
            <person name="Chen F."/>
            <person name="Li S."/>
            <person name="Ye C."/>
            <person name="Du Z."/>
            <person name="Lin W."/>
            <person name="Wang J."/>
            <person name="Yu J."/>
            <person name="Yang H."/>
            <person name="Wang J."/>
            <person name="Huang P."/>
            <person name="Yang R."/>
        </authorList>
    </citation>
    <scope>NUCLEOTIDE SEQUENCE [LARGE SCALE GENOMIC DNA]</scope>
    <source>
        <strain>91001 / Biovar Mediaevalis</strain>
    </source>
</reference>
<gene>
    <name evidence="1" type="primary">dapB</name>
    <name type="ordered locus">YPO0480</name>
    <name type="ordered locus">y3694</name>
    <name type="ordered locus">YP_3699</name>
</gene>
<proteinExistence type="inferred from homology"/>
<organism>
    <name type="scientific">Yersinia pestis</name>
    <dbReference type="NCBI Taxonomy" id="632"/>
    <lineage>
        <taxon>Bacteria</taxon>
        <taxon>Pseudomonadati</taxon>
        <taxon>Pseudomonadota</taxon>
        <taxon>Gammaproteobacteria</taxon>
        <taxon>Enterobacterales</taxon>
        <taxon>Yersiniaceae</taxon>
        <taxon>Yersinia</taxon>
    </lineage>
</organism>
<dbReference type="EC" id="1.17.1.8" evidence="1"/>
<dbReference type="EMBL" id="AL590842">
    <property type="protein sequence ID" value="CAL19160.1"/>
    <property type="molecule type" value="Genomic_DNA"/>
</dbReference>
<dbReference type="EMBL" id="AE009952">
    <property type="protein sequence ID" value="AAM87242.1"/>
    <property type="molecule type" value="Genomic_DNA"/>
</dbReference>
<dbReference type="EMBL" id="AE017042">
    <property type="protein sequence ID" value="AAS63847.1"/>
    <property type="molecule type" value="Genomic_DNA"/>
</dbReference>
<dbReference type="PIR" id="AF0059">
    <property type="entry name" value="AF0059"/>
</dbReference>
<dbReference type="RefSeq" id="WP_002210504.1">
    <property type="nucleotide sequence ID" value="NZ_WUCM01000116.1"/>
</dbReference>
<dbReference type="RefSeq" id="YP_002345553.1">
    <property type="nucleotide sequence ID" value="NC_003143.1"/>
</dbReference>
<dbReference type="SMR" id="Q8ZIL6"/>
<dbReference type="IntAct" id="Q8ZIL6">
    <property type="interactions" value="1"/>
</dbReference>
<dbReference type="STRING" id="214092.YPO0480"/>
<dbReference type="PaxDb" id="214092-YPO0480"/>
<dbReference type="DNASU" id="1148641"/>
<dbReference type="EnsemblBacteria" id="AAS63847">
    <property type="protein sequence ID" value="AAS63847"/>
    <property type="gene ID" value="YP_3699"/>
</dbReference>
<dbReference type="GeneID" id="57974130"/>
<dbReference type="KEGG" id="ype:YPO0480"/>
<dbReference type="KEGG" id="ypk:y3694"/>
<dbReference type="KEGG" id="ypm:YP_3699"/>
<dbReference type="PATRIC" id="fig|214092.21.peg.728"/>
<dbReference type="eggNOG" id="COG0289">
    <property type="taxonomic scope" value="Bacteria"/>
</dbReference>
<dbReference type="HOGENOM" id="CLU_047479_2_1_6"/>
<dbReference type="OMA" id="HHPNKAD"/>
<dbReference type="OrthoDB" id="9790352at2"/>
<dbReference type="UniPathway" id="UPA00034">
    <property type="reaction ID" value="UER00018"/>
</dbReference>
<dbReference type="Proteomes" id="UP000000815">
    <property type="component" value="Chromosome"/>
</dbReference>
<dbReference type="Proteomes" id="UP000001019">
    <property type="component" value="Chromosome"/>
</dbReference>
<dbReference type="Proteomes" id="UP000002490">
    <property type="component" value="Chromosome"/>
</dbReference>
<dbReference type="GO" id="GO:0005829">
    <property type="term" value="C:cytosol"/>
    <property type="evidence" value="ECO:0000318"/>
    <property type="project" value="GO_Central"/>
</dbReference>
<dbReference type="GO" id="GO:0008839">
    <property type="term" value="F:4-hydroxy-tetrahydrodipicolinate reductase"/>
    <property type="evidence" value="ECO:0000318"/>
    <property type="project" value="GO_Central"/>
</dbReference>
<dbReference type="GO" id="GO:0051287">
    <property type="term" value="F:NAD binding"/>
    <property type="evidence" value="ECO:0007669"/>
    <property type="project" value="UniProtKB-UniRule"/>
</dbReference>
<dbReference type="GO" id="GO:0050661">
    <property type="term" value="F:NADP binding"/>
    <property type="evidence" value="ECO:0007669"/>
    <property type="project" value="UniProtKB-UniRule"/>
</dbReference>
<dbReference type="GO" id="GO:0016726">
    <property type="term" value="F:oxidoreductase activity, acting on CH or CH2 groups, NAD or NADP as acceptor"/>
    <property type="evidence" value="ECO:0007669"/>
    <property type="project" value="UniProtKB-UniRule"/>
</dbReference>
<dbReference type="GO" id="GO:0019877">
    <property type="term" value="P:diaminopimelate biosynthetic process"/>
    <property type="evidence" value="ECO:0000318"/>
    <property type="project" value="GO_Central"/>
</dbReference>
<dbReference type="GO" id="GO:0009089">
    <property type="term" value="P:lysine biosynthetic process via diaminopimelate"/>
    <property type="evidence" value="ECO:0007669"/>
    <property type="project" value="UniProtKB-UniRule"/>
</dbReference>
<dbReference type="CDD" id="cd02274">
    <property type="entry name" value="DHDPR_N"/>
    <property type="match status" value="1"/>
</dbReference>
<dbReference type="FunFam" id="3.30.360.10:FF:000004">
    <property type="entry name" value="4-hydroxy-tetrahydrodipicolinate reductase"/>
    <property type="match status" value="1"/>
</dbReference>
<dbReference type="FunFam" id="3.40.50.720:FF:000048">
    <property type="entry name" value="4-hydroxy-tetrahydrodipicolinate reductase"/>
    <property type="match status" value="1"/>
</dbReference>
<dbReference type="Gene3D" id="3.30.360.10">
    <property type="entry name" value="Dihydrodipicolinate Reductase, domain 2"/>
    <property type="match status" value="1"/>
</dbReference>
<dbReference type="Gene3D" id="3.40.50.720">
    <property type="entry name" value="NAD(P)-binding Rossmann-like Domain"/>
    <property type="match status" value="1"/>
</dbReference>
<dbReference type="HAMAP" id="MF_00102">
    <property type="entry name" value="DapB"/>
    <property type="match status" value="1"/>
</dbReference>
<dbReference type="InterPro" id="IPR022663">
    <property type="entry name" value="DapB_C"/>
</dbReference>
<dbReference type="InterPro" id="IPR000846">
    <property type="entry name" value="DapB_N"/>
</dbReference>
<dbReference type="InterPro" id="IPR022664">
    <property type="entry name" value="DapB_N_CS"/>
</dbReference>
<dbReference type="InterPro" id="IPR023940">
    <property type="entry name" value="DHDPR_bac"/>
</dbReference>
<dbReference type="InterPro" id="IPR036291">
    <property type="entry name" value="NAD(P)-bd_dom_sf"/>
</dbReference>
<dbReference type="NCBIfam" id="TIGR00036">
    <property type="entry name" value="dapB"/>
    <property type="match status" value="1"/>
</dbReference>
<dbReference type="PANTHER" id="PTHR20836:SF0">
    <property type="entry name" value="4-HYDROXY-TETRAHYDRODIPICOLINATE REDUCTASE 1, CHLOROPLASTIC-RELATED"/>
    <property type="match status" value="1"/>
</dbReference>
<dbReference type="PANTHER" id="PTHR20836">
    <property type="entry name" value="DIHYDRODIPICOLINATE REDUCTASE"/>
    <property type="match status" value="1"/>
</dbReference>
<dbReference type="Pfam" id="PF05173">
    <property type="entry name" value="DapB_C"/>
    <property type="match status" value="1"/>
</dbReference>
<dbReference type="Pfam" id="PF01113">
    <property type="entry name" value="DapB_N"/>
    <property type="match status" value="1"/>
</dbReference>
<dbReference type="PIRSF" id="PIRSF000161">
    <property type="entry name" value="DHPR"/>
    <property type="match status" value="1"/>
</dbReference>
<dbReference type="SUPFAM" id="SSF55347">
    <property type="entry name" value="Glyceraldehyde-3-phosphate dehydrogenase-like, C-terminal domain"/>
    <property type="match status" value="1"/>
</dbReference>
<dbReference type="SUPFAM" id="SSF51735">
    <property type="entry name" value="NAD(P)-binding Rossmann-fold domains"/>
    <property type="match status" value="1"/>
</dbReference>
<dbReference type="PROSITE" id="PS01298">
    <property type="entry name" value="DAPB"/>
    <property type="match status" value="1"/>
</dbReference>
<accession>Q8ZIL6</accession>
<accession>Q0WJI5</accession>
<sequence>MTDSTIRIAIVGAGGRMGRQLIQAVTQMEGVVLGAAIERKGSTLVGSDAGELAGVGLLNVIVGDDLSQLTDNFDVLIDFTRPEGTLEHLAICRQHRKAMVIGTTGFDEAGKAAISEAAADIGIVFAANFSVGVNVVLKLLEKAAKVMGDYTDIEIIEAHHRHKVDAPSGTALAMGEAIADAMGRSLKDCAVYSREGYTGERKPGTIGFATVRAGDIVGEHTAMFADIGERVEITHKATSRMTFAHGAVKSAIWLGKHDNGLFDMRDVLNLNEL</sequence>
<comment type="function">
    <text evidence="1">Catalyzes the conversion of 4-hydroxy-tetrahydrodipicolinate (HTPA) to tetrahydrodipicolinate.</text>
</comment>
<comment type="catalytic activity">
    <reaction evidence="1">
        <text>(S)-2,3,4,5-tetrahydrodipicolinate + NAD(+) + H2O = (2S,4S)-4-hydroxy-2,3,4,5-tetrahydrodipicolinate + NADH + H(+)</text>
        <dbReference type="Rhea" id="RHEA:35323"/>
        <dbReference type="ChEBI" id="CHEBI:15377"/>
        <dbReference type="ChEBI" id="CHEBI:15378"/>
        <dbReference type="ChEBI" id="CHEBI:16845"/>
        <dbReference type="ChEBI" id="CHEBI:57540"/>
        <dbReference type="ChEBI" id="CHEBI:57945"/>
        <dbReference type="ChEBI" id="CHEBI:67139"/>
        <dbReference type="EC" id="1.17.1.8"/>
    </reaction>
</comment>
<comment type="catalytic activity">
    <reaction evidence="1">
        <text>(S)-2,3,4,5-tetrahydrodipicolinate + NADP(+) + H2O = (2S,4S)-4-hydroxy-2,3,4,5-tetrahydrodipicolinate + NADPH + H(+)</text>
        <dbReference type="Rhea" id="RHEA:35331"/>
        <dbReference type="ChEBI" id="CHEBI:15377"/>
        <dbReference type="ChEBI" id="CHEBI:15378"/>
        <dbReference type="ChEBI" id="CHEBI:16845"/>
        <dbReference type="ChEBI" id="CHEBI:57783"/>
        <dbReference type="ChEBI" id="CHEBI:58349"/>
        <dbReference type="ChEBI" id="CHEBI:67139"/>
        <dbReference type="EC" id="1.17.1.8"/>
    </reaction>
</comment>
<comment type="pathway">
    <text evidence="1">Amino-acid biosynthesis; L-lysine biosynthesis via DAP pathway; (S)-tetrahydrodipicolinate from L-aspartate: step 4/4.</text>
</comment>
<comment type="subunit">
    <text evidence="1">Homotetramer.</text>
</comment>
<comment type="subcellular location">
    <subcellularLocation>
        <location evidence="1">Cytoplasm</location>
    </subcellularLocation>
</comment>
<comment type="similarity">
    <text evidence="1">Belongs to the DapB family.</text>
</comment>
<comment type="caution">
    <text evidence="2">Was originally thought to be a dihydrodipicolinate reductase (DHDPR), catalyzing the conversion of dihydrodipicolinate to tetrahydrodipicolinate. However, it was shown in E.coli that the substrate of the enzymatic reaction is not dihydrodipicolinate (DHDP) but in fact (2S,4S)-4-hydroxy-2,3,4,5-tetrahydrodipicolinic acid (HTPA), the product released by the DapA-catalyzed reaction.</text>
</comment>
<keyword id="KW-0028">Amino-acid biosynthesis</keyword>
<keyword id="KW-0963">Cytoplasm</keyword>
<keyword id="KW-0220">Diaminopimelate biosynthesis</keyword>
<keyword id="KW-0457">Lysine biosynthesis</keyword>
<keyword id="KW-0520">NAD</keyword>
<keyword id="KW-0521">NADP</keyword>
<keyword id="KW-0560">Oxidoreductase</keyword>
<keyword id="KW-1185">Reference proteome</keyword>
<protein>
    <recommendedName>
        <fullName evidence="1">4-hydroxy-tetrahydrodipicolinate reductase</fullName>
        <shortName evidence="1">HTPA reductase</shortName>
        <ecNumber evidence="1">1.17.1.8</ecNumber>
    </recommendedName>
</protein>